<protein>
    <recommendedName>
        <fullName evidence="2">Aminotransferase verI</fullName>
        <ecNumber evidence="2">2.6.1.-</ecNumber>
    </recommendedName>
    <alternativeName>
        <fullName evidence="5">Verticillin biosynthesis cluster protein I</fullName>
    </alternativeName>
</protein>
<keyword id="KW-0032">Aminotransferase</keyword>
<keyword id="KW-0663">Pyridoxal phosphate</keyword>
<keyword id="KW-0808">Transferase</keyword>
<accession>A0A1U9YHZ6</accession>
<evidence type="ECO:0000250" key="1">
    <source>
        <dbReference type="UniProtKB" id="P00509"/>
    </source>
</evidence>
<evidence type="ECO:0000250" key="2">
    <source>
        <dbReference type="UniProtKB" id="Q4WMJ9"/>
    </source>
</evidence>
<evidence type="ECO:0000269" key="3">
    <source>
    </source>
</evidence>
<evidence type="ECO:0000269" key="4">
    <source>
    </source>
</evidence>
<evidence type="ECO:0000303" key="5">
    <source>
    </source>
</evidence>
<evidence type="ECO:0000305" key="6">
    <source>
    </source>
</evidence>
<reference key="1">
    <citation type="journal article" date="2017" name="Fungal Genet. Biol.">
        <title>Identification and characterization of the verticillin biosynthetic gene cluster in Clonostachys rogersoniana.</title>
        <authorList>
            <person name="Wang Y."/>
            <person name="Hu P."/>
            <person name="Pan Y."/>
            <person name="Zhu Y."/>
            <person name="Liu X."/>
            <person name="Che Y."/>
            <person name="Liu G."/>
        </authorList>
    </citation>
    <scope>NUCLEOTIDE SEQUENCE [GENOMIC DNA]</scope>
    <scope>FUNCTION</scope>
    <scope>DISRUPTION PHENOTYPE</scope>
    <scope>PATHWAY</scope>
    <source>
        <strain>XZC04-CC-302</strain>
    </source>
</reference>
<reference key="2">
    <citation type="journal article" date="2017" name="Microbiology">
        <title>VerZ, a Zn(II)2Cys6 DNA-binding protein, regulates the biosynthesis of verticillin in Clonostachys rogersoniana.</title>
        <authorList>
            <person name="Guo Z."/>
            <person name="Hao T."/>
            <person name="Wang Y."/>
            <person name="Pan Y."/>
            <person name="Ren F."/>
            <person name="Liu X."/>
            <person name="Che Y."/>
            <person name="Liu G."/>
        </authorList>
    </citation>
    <scope>INDUCTION</scope>
</reference>
<name>VERI_CLORO</name>
<organism>
    <name type="scientific">Clonostachys rogersoniana</name>
    <dbReference type="NCBI Taxonomy" id="122658"/>
    <lineage>
        <taxon>Eukaryota</taxon>
        <taxon>Fungi</taxon>
        <taxon>Dikarya</taxon>
        <taxon>Ascomycota</taxon>
        <taxon>Pezizomycotina</taxon>
        <taxon>Sordariomycetes</taxon>
        <taxon>Hypocreomycetidae</taxon>
        <taxon>Hypocreales</taxon>
        <taxon>Bionectriaceae</taxon>
        <taxon>Clonostachys</taxon>
    </lineage>
</organism>
<feature type="chain" id="PRO_0000450164" description="Aminotransferase verI">
    <location>
        <begin position="1"/>
        <end position="428"/>
    </location>
</feature>
<feature type="modified residue" description="N6-(pyridoxal phosphate)lysine" evidence="1">
    <location>
        <position position="254"/>
    </location>
</feature>
<dbReference type="EC" id="2.6.1.-" evidence="2"/>
<dbReference type="EMBL" id="KY359203">
    <property type="protein sequence ID" value="AQZ42161.1"/>
    <property type="molecule type" value="Genomic_DNA"/>
</dbReference>
<dbReference type="SMR" id="A0A1U9YHZ6"/>
<dbReference type="GO" id="GO:0030170">
    <property type="term" value="F:pyridoxal phosphate binding"/>
    <property type="evidence" value="ECO:0007669"/>
    <property type="project" value="InterPro"/>
</dbReference>
<dbReference type="GO" id="GO:0008483">
    <property type="term" value="F:transaminase activity"/>
    <property type="evidence" value="ECO:0007669"/>
    <property type="project" value="UniProtKB-KW"/>
</dbReference>
<dbReference type="GO" id="GO:0006520">
    <property type="term" value="P:amino acid metabolic process"/>
    <property type="evidence" value="ECO:0007669"/>
    <property type="project" value="TreeGrafter"/>
</dbReference>
<dbReference type="GO" id="GO:0009058">
    <property type="term" value="P:biosynthetic process"/>
    <property type="evidence" value="ECO:0007669"/>
    <property type="project" value="InterPro"/>
</dbReference>
<dbReference type="CDD" id="cd00609">
    <property type="entry name" value="AAT_like"/>
    <property type="match status" value="1"/>
</dbReference>
<dbReference type="Gene3D" id="3.90.1150.10">
    <property type="entry name" value="Aspartate Aminotransferase, domain 1"/>
    <property type="match status" value="1"/>
</dbReference>
<dbReference type="Gene3D" id="3.40.640.10">
    <property type="entry name" value="Type I PLP-dependent aspartate aminotransferase-like (Major domain)"/>
    <property type="match status" value="1"/>
</dbReference>
<dbReference type="InterPro" id="IPR004839">
    <property type="entry name" value="Aminotransferase_I/II_large"/>
</dbReference>
<dbReference type="InterPro" id="IPR050478">
    <property type="entry name" value="Ethylene_sulfur-biosynth"/>
</dbReference>
<dbReference type="InterPro" id="IPR015424">
    <property type="entry name" value="PyrdxlP-dep_Trfase"/>
</dbReference>
<dbReference type="InterPro" id="IPR015421">
    <property type="entry name" value="PyrdxlP-dep_Trfase_major"/>
</dbReference>
<dbReference type="InterPro" id="IPR015422">
    <property type="entry name" value="PyrdxlP-dep_Trfase_small"/>
</dbReference>
<dbReference type="PANTHER" id="PTHR43795:SF32">
    <property type="entry name" value="AMINOTRANSFERASE GLII-RELATED"/>
    <property type="match status" value="1"/>
</dbReference>
<dbReference type="PANTHER" id="PTHR43795">
    <property type="entry name" value="BIFUNCTIONAL ASPARTATE AMINOTRANSFERASE AND GLUTAMATE/ASPARTATE-PREPHENATE AMINOTRANSFERASE-RELATED"/>
    <property type="match status" value="1"/>
</dbReference>
<dbReference type="Pfam" id="PF00155">
    <property type="entry name" value="Aminotran_1_2"/>
    <property type="match status" value="1"/>
</dbReference>
<dbReference type="PRINTS" id="PR00753">
    <property type="entry name" value="ACCSYNTHASE"/>
</dbReference>
<dbReference type="SUPFAM" id="SSF53383">
    <property type="entry name" value="PLP-dependent transferases"/>
    <property type="match status" value="1"/>
</dbReference>
<comment type="function">
    <text evidence="3 6">Aminotransferase; part of the gene cluster that mediates the biosynthesis of 11'-deoxyverticillin A, one of the dimeric epipolythiodioxopiperazines (ETPs) from the verticillin family that act as mycotoxins (PubMed:28376389). 11'-deoxyverticillin A is required for normal conidiation (PubMed:28376389). The nonribosomal peptide synthetase verP is speculated to be responsible for condensation of amino acids to form the carbon skeleton of verticillin, whereas the cluster-specific tailoring enzymes are involved in further modifications leading to the production of 11'-deoxyverticillin A (Probable).</text>
</comment>
<comment type="cofactor">
    <cofactor evidence="1">
        <name>pyridoxal 5'-phosphate</name>
        <dbReference type="ChEBI" id="CHEBI:597326"/>
    </cofactor>
</comment>
<comment type="pathway">
    <text evidence="3">Mycotoxin biosynthesis.</text>
</comment>
<comment type="induction">
    <text evidence="4">Expression is regulated by the cluster-specific regulator verZ.</text>
</comment>
<comment type="disruption phenotype">
    <text evidence="3">Completely abolishes the 11'-deoxyverticillin A production.</text>
</comment>
<comment type="similarity">
    <text>Belongs to the class-I pyridoxal-phosphate-dependent aminotransferase family.</text>
</comment>
<sequence length="428" mass="47334">MLSRRARESNAWFLERFKRPLGRQGSKSNTNIDLATAENWLIRPEILSALKRNLQADFQSSHLSYAPGLGGTPELLSAISTFFNHFFSPTIPVAPEHIVTGAGCSSVLDTLINDICDDGDGLLVAAPYWGSFEVSSVLRNGVTLIPVQIKFHESHSAQGIVDAYRKAMENTSCKVRGLLFCNPHNPWGHILSVEVIDALLLFCEQADIHFVSDEIYALSTFGRMELPSGNLEHGEKFLSPATSFVSVLSRDLIKLGGCLITQANKELRMSQAILNNAKLCNAASAMVAPILGSTSQLSTLVNLNVQRMRKAARTAIQFAQFHGLTFCEPVAGVYIWLRLSEDCHTRDDEEEIVQRCTKHGALVGSGSDYSESQPGWFRLTFAIPDNEFLEGLNRIETAMGYKERFNGEMVQSSLGGFVSQLWKRFVLV</sequence>
<gene>
    <name evidence="5" type="primary">verI</name>
</gene>
<proteinExistence type="evidence at transcript level"/>